<feature type="chain" id="PRO_0000100317" description="Cold shock protein CapA">
    <location>
        <begin position="1"/>
        <end position="64" status="greater than"/>
    </location>
</feature>
<feature type="domain" description="CSD">
    <location>
        <begin position="7"/>
        <end position="64" status="greater than"/>
    </location>
</feature>
<feature type="non-terminal residue">
    <location>
        <position position="64"/>
    </location>
</feature>
<evidence type="ECO:0000250" key="1"/>
<dbReference type="EMBL" id="U62985">
    <property type="protein sequence ID" value="AAC45996.1"/>
    <property type="molecule type" value="Genomic_DNA"/>
</dbReference>
<dbReference type="SMR" id="P72188"/>
<dbReference type="STRING" id="296.B6D87_13870"/>
<dbReference type="eggNOG" id="COG1278">
    <property type="taxonomic scope" value="Bacteria"/>
</dbReference>
<dbReference type="GO" id="GO:0005829">
    <property type="term" value="C:cytosol"/>
    <property type="evidence" value="ECO:0007669"/>
    <property type="project" value="UniProtKB-ARBA"/>
</dbReference>
<dbReference type="GO" id="GO:0003677">
    <property type="term" value="F:DNA binding"/>
    <property type="evidence" value="ECO:0007669"/>
    <property type="project" value="UniProtKB-KW"/>
</dbReference>
<dbReference type="CDD" id="cd04458">
    <property type="entry name" value="CSP_CDS"/>
    <property type="match status" value="1"/>
</dbReference>
<dbReference type="FunFam" id="2.40.50.140:FF:000006">
    <property type="entry name" value="Cold shock protein CspC"/>
    <property type="match status" value="1"/>
</dbReference>
<dbReference type="Gene3D" id="2.40.50.140">
    <property type="entry name" value="Nucleic acid-binding proteins"/>
    <property type="match status" value="1"/>
</dbReference>
<dbReference type="InterPro" id="IPR012156">
    <property type="entry name" value="Cold_shock_CspA"/>
</dbReference>
<dbReference type="InterPro" id="IPR011129">
    <property type="entry name" value="CSD"/>
</dbReference>
<dbReference type="InterPro" id="IPR019844">
    <property type="entry name" value="CSD_CS"/>
</dbReference>
<dbReference type="InterPro" id="IPR002059">
    <property type="entry name" value="CSP_DNA-bd"/>
</dbReference>
<dbReference type="InterPro" id="IPR012340">
    <property type="entry name" value="NA-bd_OB-fold"/>
</dbReference>
<dbReference type="PANTHER" id="PTHR46565">
    <property type="entry name" value="COLD SHOCK DOMAIN PROTEIN 2"/>
    <property type="match status" value="1"/>
</dbReference>
<dbReference type="PANTHER" id="PTHR46565:SF20">
    <property type="entry name" value="COLD SHOCK DOMAIN-CONTAINING PROTEIN 4"/>
    <property type="match status" value="1"/>
</dbReference>
<dbReference type="Pfam" id="PF00313">
    <property type="entry name" value="CSD"/>
    <property type="match status" value="1"/>
</dbReference>
<dbReference type="PIRSF" id="PIRSF002599">
    <property type="entry name" value="Cold_shock_A"/>
    <property type="match status" value="1"/>
</dbReference>
<dbReference type="PRINTS" id="PR00050">
    <property type="entry name" value="COLDSHOCK"/>
</dbReference>
<dbReference type="SMART" id="SM00357">
    <property type="entry name" value="CSP"/>
    <property type="match status" value="1"/>
</dbReference>
<dbReference type="SUPFAM" id="SSF50249">
    <property type="entry name" value="Nucleic acid-binding proteins"/>
    <property type="match status" value="1"/>
</dbReference>
<dbReference type="PROSITE" id="PS00352">
    <property type="entry name" value="CSD_1"/>
    <property type="match status" value="1"/>
</dbReference>
<dbReference type="PROSITE" id="PS51857">
    <property type="entry name" value="CSD_2"/>
    <property type="match status" value="1"/>
</dbReference>
<reference key="1">
    <citation type="journal article" date="1997" name="J. Bacteriol.">
        <title>The cold shock response of the psychrotrophic bacterium Pseudomonas fragi involves four low-molecular-mass nucleic acid-binding proteins.</title>
        <authorList>
            <person name="Michel V."/>
            <person name="Lehoux I."/>
            <person name="Depret G."/>
            <person name="Anglade P."/>
            <person name="Labadie J."/>
            <person name="Hebraud M."/>
        </authorList>
    </citation>
    <scope>NUCLEOTIDE SEQUENCE [GENOMIC DNA]</scope>
    <source>
        <strain>K1</strain>
    </source>
</reference>
<sequence>MSQRQSGTVKWFNDEKGFGFITPQGGGDDLFVHFKAIESDGFKSLKEGQTVSFVAEKGQKGMQA</sequence>
<protein>
    <recommendedName>
        <fullName>Cold shock protein CapA</fullName>
    </recommendedName>
    <alternativeName>
        <fullName>C7.0</fullName>
    </alternativeName>
    <alternativeName>
        <fullName>Cold acclimation protein A</fullName>
    </alternativeName>
</protein>
<gene>
    <name type="primary">capA</name>
</gene>
<name>CAPA_PSEFR</name>
<proteinExistence type="evidence at transcript level"/>
<accession>P72188</accession>
<keyword id="KW-0010">Activator</keyword>
<keyword id="KW-0963">Cytoplasm</keyword>
<keyword id="KW-0238">DNA-binding</keyword>
<keyword id="KW-0346">Stress response</keyword>
<keyword id="KW-0804">Transcription</keyword>
<keyword id="KW-0805">Transcription regulation</keyword>
<comment type="function">
    <text>Affects cell viability at low temperatures.</text>
</comment>
<comment type="subcellular location">
    <subcellularLocation>
        <location evidence="1">Cytoplasm</location>
    </subcellularLocation>
</comment>
<comment type="induction">
    <text>In response to low temperature.</text>
</comment>
<organism>
    <name type="scientific">Pseudomonas fragi</name>
    <dbReference type="NCBI Taxonomy" id="296"/>
    <lineage>
        <taxon>Bacteria</taxon>
        <taxon>Pseudomonadati</taxon>
        <taxon>Pseudomonadota</taxon>
        <taxon>Gammaproteobacteria</taxon>
        <taxon>Pseudomonadales</taxon>
        <taxon>Pseudomonadaceae</taxon>
        <taxon>Pseudomonas</taxon>
    </lineage>
</organism>